<accession>F6JWV3</accession>
<name>CDS7_CONLT</name>
<sequence>MPKLEMMLLVLLILPLCYIDAVGPPPPWNMEDEIIEHWQELHCHEISDLTPWILCSPEPLCGGKGCCAQEVCDCSGPVCTCPPCL</sequence>
<feature type="signal peptide" evidence="1">
    <location>
        <begin position="1"/>
        <end position="21"/>
    </location>
</feature>
<feature type="propeptide" id="PRO_0000451017" evidence="4">
    <location>
        <begin position="22"/>
        <end position="40"/>
    </location>
</feature>
<feature type="chain" id="PRO_5003342676" description="Conotoxin Lt28.7" evidence="4">
    <location>
        <begin position="41"/>
        <end position="85"/>
    </location>
</feature>
<keyword id="KW-1015">Disulfide bond</keyword>
<keyword id="KW-0528">Neurotoxin</keyword>
<keyword id="KW-0964">Secreted</keyword>
<keyword id="KW-0732">Signal</keyword>
<keyword id="KW-0800">Toxin</keyword>
<comment type="function">
    <text evidence="3">Probable neurotoxin.</text>
</comment>
<comment type="subcellular location">
    <subcellularLocation>
        <location evidence="4">Secreted</location>
    </subcellularLocation>
</comment>
<comment type="tissue specificity">
    <text evidence="4">Expressed by the venom duct.</text>
</comment>
<comment type="domain">
    <text evidence="3">The cysteine framework is XXVIII (C-C-C-CC-C-C-C-C-C).</text>
</comment>
<comment type="PTM">
    <text evidence="3">Contains 5 disulfide bonds.</text>
</comment>
<comment type="similarity">
    <text evidence="3">Belongs to the conotoxin D superfamily.</text>
</comment>
<proteinExistence type="inferred from homology"/>
<organism>
    <name type="scientific">Conus litteratus</name>
    <name type="common">Lettered cone</name>
    <dbReference type="NCBI Taxonomy" id="89445"/>
    <lineage>
        <taxon>Eukaryota</taxon>
        <taxon>Metazoa</taxon>
        <taxon>Spiralia</taxon>
        <taxon>Lophotrochozoa</taxon>
        <taxon>Mollusca</taxon>
        <taxon>Gastropoda</taxon>
        <taxon>Caenogastropoda</taxon>
        <taxon>Neogastropoda</taxon>
        <taxon>Conoidea</taxon>
        <taxon>Conidae</taxon>
        <taxon>Conus</taxon>
        <taxon>Elisaconus</taxon>
    </lineage>
</organism>
<reference key="1">
    <citation type="journal article" date="2017" name="Peptides">
        <title>Cloning, expression and functional characterization of a D-superfamily conotoxin Lt28.1 with previously undescribed cysteine pattern.</title>
        <authorList>
            <person name="Lu J."/>
            <person name="Zhang K."/>
            <person name="Wang S."/>
            <person name="Sun T."/>
            <person name="Yu S."/>
            <person name="Dai Q."/>
            <person name="Liu Z."/>
        </authorList>
    </citation>
    <scope>NUCLEOTIDE SEQUENCE [MRNA]</scope>
    <source>
        <tissue>Venom duct</tissue>
    </source>
</reference>
<protein>
    <recommendedName>
        <fullName evidence="2">Conotoxin Lt28.7</fullName>
    </recommendedName>
    <alternativeName>
        <fullName evidence="5">Conotoxin Lt15.6c</fullName>
    </alternativeName>
</protein>
<dbReference type="EMBL" id="HM003932">
    <property type="protein sequence ID" value="ADZ76490.1"/>
    <property type="molecule type" value="mRNA"/>
</dbReference>
<dbReference type="GO" id="GO:0005576">
    <property type="term" value="C:extracellular region"/>
    <property type="evidence" value="ECO:0007669"/>
    <property type="project" value="UniProtKB-SubCell"/>
</dbReference>
<dbReference type="GO" id="GO:0090729">
    <property type="term" value="F:toxin activity"/>
    <property type="evidence" value="ECO:0007669"/>
    <property type="project" value="UniProtKB-KW"/>
</dbReference>
<evidence type="ECO:0000255" key="1"/>
<evidence type="ECO:0000303" key="2">
    <source>
    </source>
</evidence>
<evidence type="ECO:0000305" key="3"/>
<evidence type="ECO:0000305" key="4">
    <source>
    </source>
</evidence>
<evidence type="ECO:0000312" key="5">
    <source>
        <dbReference type="EMBL" id="ADZ76490.1"/>
    </source>
</evidence>